<feature type="chain" id="PRO_0000212891" description="Palmitoyltransferase ZDHHC14">
    <location>
        <begin position="1"/>
        <end position="488"/>
    </location>
</feature>
<feature type="topological domain" description="Cytoplasmic" evidence="10">
    <location>
        <begin position="1"/>
        <end position="60"/>
    </location>
</feature>
<feature type="transmembrane region" description="Helical" evidence="2">
    <location>
        <begin position="61"/>
        <end position="81"/>
    </location>
</feature>
<feature type="topological domain" description="Lumenal" evidence="10">
    <location>
        <begin position="82"/>
        <end position="89"/>
    </location>
</feature>
<feature type="transmembrane region" description="Helical" evidence="2">
    <location>
        <begin position="90"/>
        <end position="110"/>
    </location>
</feature>
<feature type="topological domain" description="Cytoplasmic" evidence="10">
    <location>
        <begin position="111"/>
        <end position="208"/>
    </location>
</feature>
<feature type="transmembrane region" description="Helical" evidence="2">
    <location>
        <begin position="209"/>
        <end position="229"/>
    </location>
</feature>
<feature type="topological domain" description="Lumenal" evidence="10">
    <location>
        <begin position="230"/>
        <end position="255"/>
    </location>
</feature>
<feature type="transmembrane region" description="Helical" evidence="2">
    <location>
        <begin position="256"/>
        <end position="276"/>
    </location>
</feature>
<feature type="topological domain" description="Cytoplasmic" evidence="10">
    <location>
        <begin position="277"/>
        <end position="488"/>
    </location>
</feature>
<feature type="domain" description="DHHC" evidence="3">
    <location>
        <begin position="165"/>
        <end position="215"/>
    </location>
</feature>
<feature type="active site" description="S-palmitoyl cysteine intermediate" evidence="3">
    <location>
        <position position="195"/>
    </location>
</feature>
<feature type="modified residue" description="Phosphoserine" evidence="13 14 15">
    <location>
        <position position="455"/>
    </location>
</feature>
<feature type="splice variant" id="VSP_008651" description="In isoform 2." evidence="9">
    <location>
        <begin position="357"/>
        <end position="371"/>
    </location>
</feature>
<feature type="sequence variant" id="VAR_034586" description="In dbSNP:rs8180688.">
    <original>T</original>
    <variation>M</variation>
    <location>
        <position position="334"/>
    </location>
</feature>
<keyword id="KW-0012">Acyltransferase</keyword>
<keyword id="KW-0025">Alternative splicing</keyword>
<keyword id="KW-0256">Endoplasmic reticulum</keyword>
<keyword id="KW-0333">Golgi apparatus</keyword>
<keyword id="KW-0449">Lipoprotein</keyword>
<keyword id="KW-0472">Membrane</keyword>
<keyword id="KW-0564">Palmitate</keyword>
<keyword id="KW-0597">Phosphoprotein</keyword>
<keyword id="KW-1267">Proteomics identification</keyword>
<keyword id="KW-1185">Reference proteome</keyword>
<keyword id="KW-0808">Transferase</keyword>
<keyword id="KW-0812">Transmembrane</keyword>
<keyword id="KW-1133">Transmembrane helix</keyword>
<gene>
    <name evidence="12" type="primary">ZDHHC14</name>
</gene>
<dbReference type="EC" id="2.3.1.225" evidence="11"/>
<dbReference type="EMBL" id="AF542388">
    <property type="protein sequence ID" value="AAN47142.1"/>
    <property type="molecule type" value="mRNA"/>
</dbReference>
<dbReference type="EMBL" id="AF542389">
    <property type="protein sequence ID" value="AAN47143.1"/>
    <property type="molecule type" value="mRNA"/>
</dbReference>
<dbReference type="EMBL" id="AL450328">
    <property type="status" value="NOT_ANNOTATED_CDS"/>
    <property type="molecule type" value="Genomic_DNA"/>
</dbReference>
<dbReference type="EMBL" id="AL133510">
    <property type="status" value="NOT_ANNOTATED_CDS"/>
    <property type="molecule type" value="Genomic_DNA"/>
</dbReference>
<dbReference type="EMBL" id="AL117344">
    <property type="status" value="NOT_ANNOTATED_CDS"/>
    <property type="molecule type" value="Genomic_DNA"/>
</dbReference>
<dbReference type="EMBL" id="CH471051">
    <property type="protein sequence ID" value="EAW47671.1"/>
    <property type="molecule type" value="Genomic_DNA"/>
</dbReference>
<dbReference type="EMBL" id="AK024637">
    <property type="protein sequence ID" value="BAB14941.1"/>
    <property type="status" value="ALT_INIT"/>
    <property type="molecule type" value="mRNA"/>
</dbReference>
<dbReference type="EMBL" id="BC056399">
    <property type="protein sequence ID" value="AAH56399.1"/>
    <property type="molecule type" value="mRNA"/>
</dbReference>
<dbReference type="CCDS" id="CCDS47510.1">
    <molecule id="Q8IZN3-2"/>
</dbReference>
<dbReference type="CCDS" id="CCDS5252.1">
    <molecule id="Q8IZN3-1"/>
</dbReference>
<dbReference type="RefSeq" id="NP_078906.2">
    <molecule id="Q8IZN3-1"/>
    <property type="nucleotide sequence ID" value="NM_024630.2"/>
</dbReference>
<dbReference type="RefSeq" id="NP_714968.1">
    <molecule id="Q8IZN3-2"/>
    <property type="nucleotide sequence ID" value="NM_153746.2"/>
</dbReference>
<dbReference type="SMR" id="Q8IZN3"/>
<dbReference type="BioGRID" id="122806">
    <property type="interactions" value="8"/>
</dbReference>
<dbReference type="FunCoup" id="Q8IZN3">
    <property type="interactions" value="1010"/>
</dbReference>
<dbReference type="STRING" id="9606.ENSP00000352821"/>
<dbReference type="GlyGen" id="Q8IZN3">
    <property type="glycosylation" value="1 site"/>
</dbReference>
<dbReference type="iPTMnet" id="Q8IZN3"/>
<dbReference type="PhosphoSitePlus" id="Q8IZN3"/>
<dbReference type="SwissPalm" id="Q8IZN3"/>
<dbReference type="BioMuta" id="ZDHHC14"/>
<dbReference type="DMDM" id="37999849"/>
<dbReference type="jPOST" id="Q8IZN3"/>
<dbReference type="MassIVE" id="Q8IZN3"/>
<dbReference type="PaxDb" id="9606-ENSP00000352821"/>
<dbReference type="PeptideAtlas" id="Q8IZN3"/>
<dbReference type="ProteomicsDB" id="71377">
    <molecule id="Q8IZN3-1"/>
</dbReference>
<dbReference type="ProteomicsDB" id="71378">
    <molecule id="Q8IZN3-2"/>
</dbReference>
<dbReference type="Pumba" id="Q8IZN3"/>
<dbReference type="Antibodypedia" id="33428">
    <property type="antibodies" value="50 antibodies from 18 providers"/>
</dbReference>
<dbReference type="DNASU" id="79683"/>
<dbReference type="Ensembl" id="ENST00000359775.10">
    <molecule id="Q8IZN3-1"/>
    <property type="protein sequence ID" value="ENSP00000352821.5"/>
    <property type="gene ID" value="ENSG00000175048.17"/>
</dbReference>
<dbReference type="Ensembl" id="ENST00000414563.6">
    <molecule id="Q8IZN3-2"/>
    <property type="protein sequence ID" value="ENSP00000410713.2"/>
    <property type="gene ID" value="ENSG00000175048.17"/>
</dbReference>
<dbReference type="GeneID" id="79683"/>
<dbReference type="KEGG" id="hsa:79683"/>
<dbReference type="MANE-Select" id="ENST00000359775.10">
    <property type="protein sequence ID" value="ENSP00000352821.5"/>
    <property type="RefSeq nucleotide sequence ID" value="NM_024630.3"/>
    <property type="RefSeq protein sequence ID" value="NP_078906.2"/>
</dbReference>
<dbReference type="UCSC" id="uc003qqs.4">
    <molecule id="Q8IZN3-1"/>
    <property type="organism name" value="human"/>
</dbReference>
<dbReference type="AGR" id="HGNC:20341"/>
<dbReference type="CTD" id="79683"/>
<dbReference type="DisGeNET" id="79683"/>
<dbReference type="GeneCards" id="ZDHHC14"/>
<dbReference type="HGNC" id="HGNC:20341">
    <property type="gene designation" value="ZDHHC14"/>
</dbReference>
<dbReference type="HPA" id="ENSG00000175048">
    <property type="expression patterns" value="Low tissue specificity"/>
</dbReference>
<dbReference type="MIM" id="619295">
    <property type="type" value="gene"/>
</dbReference>
<dbReference type="neXtProt" id="NX_Q8IZN3"/>
<dbReference type="OpenTargets" id="ENSG00000175048"/>
<dbReference type="PharmGKB" id="PA134935513"/>
<dbReference type="VEuPathDB" id="HostDB:ENSG00000175048"/>
<dbReference type="eggNOG" id="KOG1311">
    <property type="taxonomic scope" value="Eukaryota"/>
</dbReference>
<dbReference type="GeneTree" id="ENSGT00940000156483"/>
<dbReference type="HOGENOM" id="CLU_018741_0_0_1"/>
<dbReference type="InParanoid" id="Q8IZN3"/>
<dbReference type="OMA" id="TSDEMHL"/>
<dbReference type="OrthoDB" id="4096362at2759"/>
<dbReference type="PAN-GO" id="Q8IZN3">
    <property type="GO annotations" value="5 GO annotations based on evolutionary models"/>
</dbReference>
<dbReference type="PhylomeDB" id="Q8IZN3"/>
<dbReference type="TreeFam" id="TF312923"/>
<dbReference type="PathwayCommons" id="Q8IZN3"/>
<dbReference type="BioGRID-ORCS" id="79683">
    <property type="hits" value="8 hits in 1157 CRISPR screens"/>
</dbReference>
<dbReference type="ChiTaRS" id="ZDHHC14">
    <property type="organism name" value="human"/>
</dbReference>
<dbReference type="GenomeRNAi" id="79683"/>
<dbReference type="Pharos" id="Q8IZN3">
    <property type="development level" value="Tbio"/>
</dbReference>
<dbReference type="PRO" id="PR:Q8IZN3"/>
<dbReference type="Proteomes" id="UP000005640">
    <property type="component" value="Chromosome 6"/>
</dbReference>
<dbReference type="RNAct" id="Q8IZN3">
    <property type="molecule type" value="protein"/>
</dbReference>
<dbReference type="Bgee" id="ENSG00000175048">
    <property type="expression patterns" value="Expressed in C1 segment of cervical spinal cord and 167 other cell types or tissues"/>
</dbReference>
<dbReference type="ExpressionAtlas" id="Q8IZN3">
    <property type="expression patterns" value="baseline and differential"/>
</dbReference>
<dbReference type="GO" id="GO:0005783">
    <property type="term" value="C:endoplasmic reticulum"/>
    <property type="evidence" value="ECO:0000314"/>
    <property type="project" value="UniProtKB"/>
</dbReference>
<dbReference type="GO" id="GO:0005789">
    <property type="term" value="C:endoplasmic reticulum membrane"/>
    <property type="evidence" value="ECO:0007669"/>
    <property type="project" value="UniProtKB-SubCell"/>
</dbReference>
<dbReference type="GO" id="GO:0005794">
    <property type="term" value="C:Golgi apparatus"/>
    <property type="evidence" value="ECO:0000318"/>
    <property type="project" value="GO_Central"/>
</dbReference>
<dbReference type="GO" id="GO:0032580">
    <property type="term" value="C:Golgi cisterna membrane"/>
    <property type="evidence" value="ECO:0007669"/>
    <property type="project" value="UniProtKB-SubCell"/>
</dbReference>
<dbReference type="GO" id="GO:0016409">
    <property type="term" value="F:palmitoyltransferase activity"/>
    <property type="evidence" value="ECO:0000314"/>
    <property type="project" value="UniProtKB"/>
</dbReference>
<dbReference type="GO" id="GO:0019706">
    <property type="term" value="F:protein-cysteine S-palmitoyltransferase activity"/>
    <property type="evidence" value="ECO:0000318"/>
    <property type="project" value="GO_Central"/>
</dbReference>
<dbReference type="GO" id="GO:0018230">
    <property type="term" value="P:peptidyl-L-cysteine S-palmitoylation"/>
    <property type="evidence" value="ECO:0000315"/>
    <property type="project" value="UniProtKB"/>
</dbReference>
<dbReference type="GO" id="GO:0018345">
    <property type="term" value="P:protein palmitoylation"/>
    <property type="evidence" value="ECO:0000314"/>
    <property type="project" value="UniProtKB"/>
</dbReference>
<dbReference type="GO" id="GO:0006612">
    <property type="term" value="P:protein targeting to membrane"/>
    <property type="evidence" value="ECO:0000318"/>
    <property type="project" value="GO_Central"/>
</dbReference>
<dbReference type="InterPro" id="IPR001594">
    <property type="entry name" value="Palmitoyltrfase_DHHC"/>
</dbReference>
<dbReference type="InterPro" id="IPR039859">
    <property type="entry name" value="PFA4/ZDH16/20/ERF2-like"/>
</dbReference>
<dbReference type="PANTHER" id="PTHR22883:SF28">
    <property type="entry name" value="PALMITOYLTRANSFERASE ZDHHC14"/>
    <property type="match status" value="1"/>
</dbReference>
<dbReference type="PANTHER" id="PTHR22883">
    <property type="entry name" value="ZINC FINGER DHHC DOMAIN CONTAINING PROTEIN"/>
    <property type="match status" value="1"/>
</dbReference>
<dbReference type="Pfam" id="PF01529">
    <property type="entry name" value="DHHC"/>
    <property type="match status" value="1"/>
</dbReference>
<dbReference type="PROSITE" id="PS50216">
    <property type="entry name" value="DHHC"/>
    <property type="match status" value="1"/>
</dbReference>
<sequence length="488" mass="53388">MPPGGGGPMKDCEYSQISTHSSSPMESPHKKKKIAARRKWEVFPGRNKFFCNGRIMMARQTGVFYLTLVLILVTSGLFFAFDCPYLAVKITPAIPAVAGILFFFVMGTLLRTSFSDPGVLPRATPDEAADLERQIDIANGTSSGGYRPPPRTKEVIINGQTVKLKYCFTCKIFRPPRASHCSLCDNCVERFDHHCPWVGNCVGKRNYRFFYMFILSLSFLTVFIFAFVITHVILRSQQTGFLNALKDSPASVLEAVVCFFSVWSIVGLSGFHTYLISSNQTTNEDIKGSWSNKRGKENYNPYSYGNIFTNCCVALCGPISPSLIDRRGYIQPDTPQPAAPSNGITMYGATQSQSDMCDQDQCIQSTKFVLQAAATPLLQSEPSLTSDELHLPGKPGLGTPCASLTLGPPTPPASMPNLAEATLADVMPRKDEHMGHQFLTPDEAPSPPRLLAAGSPLAHSRTMHVLGLASQDSLHEDSVRGLVKLSSV</sequence>
<proteinExistence type="evidence at protein level"/>
<comment type="function">
    <text evidence="5 6 7">Palmitoyltransferase that could catalyze the addition of palmitate onto various protein substrates. May have a palmitoyltransferase activity toward the beta-2 adrenergic receptor/ADRB2 and thereby regulate G protein-coupled receptor signaling (PubMed:27481942). May play a role in cell differentiation and apoptosis (PubMed:21151021, PubMed:24407904).</text>
</comment>
<comment type="catalytic activity">
    <reaction evidence="11">
        <text>L-cysteinyl-[protein] + hexadecanoyl-CoA = S-hexadecanoyl-L-cysteinyl-[protein] + CoA</text>
        <dbReference type="Rhea" id="RHEA:36683"/>
        <dbReference type="Rhea" id="RHEA-COMP:10131"/>
        <dbReference type="Rhea" id="RHEA-COMP:11032"/>
        <dbReference type="ChEBI" id="CHEBI:29950"/>
        <dbReference type="ChEBI" id="CHEBI:57287"/>
        <dbReference type="ChEBI" id="CHEBI:57379"/>
        <dbReference type="ChEBI" id="CHEBI:74151"/>
        <dbReference type="EC" id="2.3.1.225"/>
    </reaction>
    <physiologicalReaction direction="left-to-right" evidence="11">
        <dbReference type="Rhea" id="RHEA:36684"/>
    </physiologicalReaction>
</comment>
<comment type="subcellular location">
    <subcellularLocation>
        <location evidence="4">Endoplasmic reticulum membrane</location>
        <topology evidence="2">Multi-pass membrane protein</topology>
    </subcellularLocation>
    <subcellularLocation>
        <location evidence="11">Golgi apparatus</location>
        <location evidence="11">Golgi stack membrane</location>
        <topology evidence="2">Multi-pass membrane protein</topology>
    </subcellularLocation>
</comment>
<comment type="alternative products">
    <event type="alternative splicing"/>
    <isoform>
        <id>Q8IZN3-1</id>
        <name>1</name>
        <sequence type="displayed"/>
    </isoform>
    <isoform>
        <id>Q8IZN3-2</id>
        <name>2</name>
        <sequence type="described" ref="VSP_008651"/>
    </isoform>
</comment>
<comment type="tissue specificity">
    <text evidence="4">Widely expressed.</text>
</comment>
<comment type="domain">
    <text evidence="1">The DHHC domain is required for palmitoyltransferase activity.</text>
</comment>
<comment type="similarity">
    <text evidence="10">Belongs to the DHHC palmitoyltransferase family. ERF2/ZDHHC9 subfamily.</text>
</comment>
<comment type="sequence caution" evidence="10">
    <conflict type="erroneous initiation">
        <sequence resource="EMBL-CDS" id="BAB14941"/>
    </conflict>
</comment>
<evidence type="ECO:0000250" key="1">
    <source>
        <dbReference type="UniProtKB" id="Q8IUH5"/>
    </source>
</evidence>
<evidence type="ECO:0000255" key="2"/>
<evidence type="ECO:0000255" key="3">
    <source>
        <dbReference type="PROSITE-ProRule" id="PRU00067"/>
    </source>
</evidence>
<evidence type="ECO:0000269" key="4">
    <source>
    </source>
</evidence>
<evidence type="ECO:0000269" key="5">
    <source>
    </source>
</evidence>
<evidence type="ECO:0000269" key="6">
    <source>
    </source>
</evidence>
<evidence type="ECO:0000269" key="7">
    <source>
    </source>
</evidence>
<evidence type="ECO:0000303" key="8">
    <source>
    </source>
</evidence>
<evidence type="ECO:0000303" key="9">
    <source ref="1"/>
</evidence>
<evidence type="ECO:0000305" key="10"/>
<evidence type="ECO:0000305" key="11">
    <source>
    </source>
</evidence>
<evidence type="ECO:0000312" key="12">
    <source>
        <dbReference type="HGNC" id="HGNC:20341"/>
    </source>
</evidence>
<evidence type="ECO:0007744" key="13">
    <source>
    </source>
</evidence>
<evidence type="ECO:0007744" key="14">
    <source>
    </source>
</evidence>
<evidence type="ECO:0007744" key="15">
    <source>
    </source>
</evidence>
<protein>
    <recommendedName>
        <fullName evidence="11">Palmitoyltransferase ZDHHC14</fullName>
        <ecNumber evidence="11">2.3.1.225</ecNumber>
    </recommendedName>
    <alternativeName>
        <fullName evidence="8">DHHC domain-containing cysteine-rich protein 14</fullName>
        <shortName evidence="8">DHHC-14</shortName>
    </alternativeName>
    <alternativeName>
        <fullName evidence="9">NEW1 domain-containing protein</fullName>
        <shortName evidence="9">NEW1CP</shortName>
    </alternativeName>
    <alternativeName>
        <fullName evidence="12">Zinc finger DHHC domain-containing protein 14</fullName>
    </alternativeName>
</protein>
<name>ZDH14_HUMAN</name>
<reference key="1">
    <citation type="submission" date="2002-08" db="EMBL/GenBank/DDBJ databases">
        <authorList>
            <person name="Guo J.H."/>
            <person name="Chen L."/>
            <person name="Yu L."/>
        </authorList>
    </citation>
    <scope>NUCLEOTIDE SEQUENCE [LARGE SCALE MRNA] (ISOFORMS 1 AND 2)</scope>
    <source>
        <tissue>Brain</tissue>
        <tissue>Stomach</tissue>
    </source>
</reference>
<reference key="2">
    <citation type="journal article" date="2003" name="Nature">
        <title>The DNA sequence and analysis of human chromosome 6.</title>
        <authorList>
            <person name="Mungall A.J."/>
            <person name="Palmer S.A."/>
            <person name="Sims S.K."/>
            <person name="Edwards C.A."/>
            <person name="Ashurst J.L."/>
            <person name="Wilming L."/>
            <person name="Jones M.C."/>
            <person name="Horton R."/>
            <person name="Hunt S.E."/>
            <person name="Scott C.E."/>
            <person name="Gilbert J.G.R."/>
            <person name="Clamp M.E."/>
            <person name="Bethel G."/>
            <person name="Milne S."/>
            <person name="Ainscough R."/>
            <person name="Almeida J.P."/>
            <person name="Ambrose K.D."/>
            <person name="Andrews T.D."/>
            <person name="Ashwell R.I.S."/>
            <person name="Babbage A.K."/>
            <person name="Bagguley C.L."/>
            <person name="Bailey J."/>
            <person name="Banerjee R."/>
            <person name="Barker D.J."/>
            <person name="Barlow K.F."/>
            <person name="Bates K."/>
            <person name="Beare D.M."/>
            <person name="Beasley H."/>
            <person name="Beasley O."/>
            <person name="Bird C.P."/>
            <person name="Blakey S.E."/>
            <person name="Bray-Allen S."/>
            <person name="Brook J."/>
            <person name="Brown A.J."/>
            <person name="Brown J.Y."/>
            <person name="Burford D.C."/>
            <person name="Burrill W."/>
            <person name="Burton J."/>
            <person name="Carder C."/>
            <person name="Carter N.P."/>
            <person name="Chapman J.C."/>
            <person name="Clark S.Y."/>
            <person name="Clark G."/>
            <person name="Clee C.M."/>
            <person name="Clegg S."/>
            <person name="Cobley V."/>
            <person name="Collier R.E."/>
            <person name="Collins J.E."/>
            <person name="Colman L.K."/>
            <person name="Corby N.R."/>
            <person name="Coville G.J."/>
            <person name="Culley K.M."/>
            <person name="Dhami P."/>
            <person name="Davies J."/>
            <person name="Dunn M."/>
            <person name="Earthrowl M.E."/>
            <person name="Ellington A.E."/>
            <person name="Evans K.A."/>
            <person name="Faulkner L."/>
            <person name="Francis M.D."/>
            <person name="Frankish A."/>
            <person name="Frankland J."/>
            <person name="French L."/>
            <person name="Garner P."/>
            <person name="Garnett J."/>
            <person name="Ghori M.J."/>
            <person name="Gilby L.M."/>
            <person name="Gillson C.J."/>
            <person name="Glithero R.J."/>
            <person name="Grafham D.V."/>
            <person name="Grant M."/>
            <person name="Gribble S."/>
            <person name="Griffiths C."/>
            <person name="Griffiths M.N.D."/>
            <person name="Hall R."/>
            <person name="Halls K.S."/>
            <person name="Hammond S."/>
            <person name="Harley J.L."/>
            <person name="Hart E.A."/>
            <person name="Heath P.D."/>
            <person name="Heathcott R."/>
            <person name="Holmes S.J."/>
            <person name="Howden P.J."/>
            <person name="Howe K.L."/>
            <person name="Howell G.R."/>
            <person name="Huckle E."/>
            <person name="Humphray S.J."/>
            <person name="Humphries M.D."/>
            <person name="Hunt A.R."/>
            <person name="Johnson C.M."/>
            <person name="Joy A.A."/>
            <person name="Kay M."/>
            <person name="Keenan S.J."/>
            <person name="Kimberley A.M."/>
            <person name="King A."/>
            <person name="Laird G.K."/>
            <person name="Langford C."/>
            <person name="Lawlor S."/>
            <person name="Leongamornlert D.A."/>
            <person name="Leversha M."/>
            <person name="Lloyd C.R."/>
            <person name="Lloyd D.M."/>
            <person name="Loveland J.E."/>
            <person name="Lovell J."/>
            <person name="Martin S."/>
            <person name="Mashreghi-Mohammadi M."/>
            <person name="Maslen G.L."/>
            <person name="Matthews L."/>
            <person name="McCann O.T."/>
            <person name="McLaren S.J."/>
            <person name="McLay K."/>
            <person name="McMurray A."/>
            <person name="Moore M.J.F."/>
            <person name="Mullikin J.C."/>
            <person name="Niblett D."/>
            <person name="Nickerson T."/>
            <person name="Novik K.L."/>
            <person name="Oliver K."/>
            <person name="Overton-Larty E.K."/>
            <person name="Parker A."/>
            <person name="Patel R."/>
            <person name="Pearce A.V."/>
            <person name="Peck A.I."/>
            <person name="Phillimore B.J.C.T."/>
            <person name="Phillips S."/>
            <person name="Plumb R.W."/>
            <person name="Porter K.M."/>
            <person name="Ramsey Y."/>
            <person name="Ranby S.A."/>
            <person name="Rice C.M."/>
            <person name="Ross M.T."/>
            <person name="Searle S.M."/>
            <person name="Sehra H.K."/>
            <person name="Sheridan E."/>
            <person name="Skuce C.D."/>
            <person name="Smith S."/>
            <person name="Smith M."/>
            <person name="Spraggon L."/>
            <person name="Squares S.L."/>
            <person name="Steward C.A."/>
            <person name="Sycamore N."/>
            <person name="Tamlyn-Hall G."/>
            <person name="Tester J."/>
            <person name="Theaker A.J."/>
            <person name="Thomas D.W."/>
            <person name="Thorpe A."/>
            <person name="Tracey A."/>
            <person name="Tromans A."/>
            <person name="Tubby B."/>
            <person name="Wall M."/>
            <person name="Wallis J.M."/>
            <person name="West A.P."/>
            <person name="White S.S."/>
            <person name="Whitehead S.L."/>
            <person name="Whittaker H."/>
            <person name="Wild A."/>
            <person name="Willey D.J."/>
            <person name="Wilmer T.E."/>
            <person name="Wood J.M."/>
            <person name="Wray P.W."/>
            <person name="Wyatt J.C."/>
            <person name="Young L."/>
            <person name="Younger R.M."/>
            <person name="Bentley D.R."/>
            <person name="Coulson A."/>
            <person name="Durbin R.M."/>
            <person name="Hubbard T."/>
            <person name="Sulston J.E."/>
            <person name="Dunham I."/>
            <person name="Rogers J."/>
            <person name="Beck S."/>
        </authorList>
    </citation>
    <scope>NUCLEOTIDE SEQUENCE [LARGE SCALE GENOMIC DNA]</scope>
</reference>
<reference key="3">
    <citation type="submission" date="2005-09" db="EMBL/GenBank/DDBJ databases">
        <authorList>
            <person name="Mural R.J."/>
            <person name="Istrail S."/>
            <person name="Sutton G.G."/>
            <person name="Florea L."/>
            <person name="Halpern A.L."/>
            <person name="Mobarry C.M."/>
            <person name="Lippert R."/>
            <person name="Walenz B."/>
            <person name="Shatkay H."/>
            <person name="Dew I."/>
            <person name="Miller J.R."/>
            <person name="Flanigan M.J."/>
            <person name="Edwards N.J."/>
            <person name="Bolanos R."/>
            <person name="Fasulo D."/>
            <person name="Halldorsson B.V."/>
            <person name="Hannenhalli S."/>
            <person name="Turner R."/>
            <person name="Yooseph S."/>
            <person name="Lu F."/>
            <person name="Nusskern D.R."/>
            <person name="Shue B.C."/>
            <person name="Zheng X.H."/>
            <person name="Zhong F."/>
            <person name="Delcher A.L."/>
            <person name="Huson D.H."/>
            <person name="Kravitz S.A."/>
            <person name="Mouchard L."/>
            <person name="Reinert K."/>
            <person name="Remington K.A."/>
            <person name="Clark A.G."/>
            <person name="Waterman M.S."/>
            <person name="Eichler E.E."/>
            <person name="Adams M.D."/>
            <person name="Hunkapiller M.W."/>
            <person name="Myers E.W."/>
            <person name="Venter J.C."/>
        </authorList>
    </citation>
    <scope>NUCLEOTIDE SEQUENCE [LARGE SCALE GENOMIC DNA]</scope>
</reference>
<reference key="4">
    <citation type="journal article" date="2004" name="Nat. Genet.">
        <title>Complete sequencing and characterization of 21,243 full-length human cDNAs.</title>
        <authorList>
            <person name="Ota T."/>
            <person name="Suzuki Y."/>
            <person name="Nishikawa T."/>
            <person name="Otsuki T."/>
            <person name="Sugiyama T."/>
            <person name="Irie R."/>
            <person name="Wakamatsu A."/>
            <person name="Hayashi K."/>
            <person name="Sato H."/>
            <person name="Nagai K."/>
            <person name="Kimura K."/>
            <person name="Makita H."/>
            <person name="Sekine M."/>
            <person name="Obayashi M."/>
            <person name="Nishi T."/>
            <person name="Shibahara T."/>
            <person name="Tanaka T."/>
            <person name="Ishii S."/>
            <person name="Yamamoto J."/>
            <person name="Saito K."/>
            <person name="Kawai Y."/>
            <person name="Isono Y."/>
            <person name="Nakamura Y."/>
            <person name="Nagahari K."/>
            <person name="Murakami K."/>
            <person name="Yasuda T."/>
            <person name="Iwayanagi T."/>
            <person name="Wagatsuma M."/>
            <person name="Shiratori A."/>
            <person name="Sudo H."/>
            <person name="Hosoiri T."/>
            <person name="Kaku Y."/>
            <person name="Kodaira H."/>
            <person name="Kondo H."/>
            <person name="Sugawara M."/>
            <person name="Takahashi M."/>
            <person name="Kanda K."/>
            <person name="Yokoi T."/>
            <person name="Furuya T."/>
            <person name="Kikkawa E."/>
            <person name="Omura Y."/>
            <person name="Abe K."/>
            <person name="Kamihara K."/>
            <person name="Katsuta N."/>
            <person name="Sato K."/>
            <person name="Tanikawa M."/>
            <person name="Yamazaki M."/>
            <person name="Ninomiya K."/>
            <person name="Ishibashi T."/>
            <person name="Yamashita H."/>
            <person name="Murakawa K."/>
            <person name="Fujimori K."/>
            <person name="Tanai H."/>
            <person name="Kimata M."/>
            <person name="Watanabe M."/>
            <person name="Hiraoka S."/>
            <person name="Chiba Y."/>
            <person name="Ishida S."/>
            <person name="Ono Y."/>
            <person name="Takiguchi S."/>
            <person name="Watanabe S."/>
            <person name="Yosida M."/>
            <person name="Hotuta T."/>
            <person name="Kusano J."/>
            <person name="Kanehori K."/>
            <person name="Takahashi-Fujii A."/>
            <person name="Hara H."/>
            <person name="Tanase T.-O."/>
            <person name="Nomura Y."/>
            <person name="Togiya S."/>
            <person name="Komai F."/>
            <person name="Hara R."/>
            <person name="Takeuchi K."/>
            <person name="Arita M."/>
            <person name="Imose N."/>
            <person name="Musashino K."/>
            <person name="Yuuki H."/>
            <person name="Oshima A."/>
            <person name="Sasaki N."/>
            <person name="Aotsuka S."/>
            <person name="Yoshikawa Y."/>
            <person name="Matsunawa H."/>
            <person name="Ichihara T."/>
            <person name="Shiohata N."/>
            <person name="Sano S."/>
            <person name="Moriya S."/>
            <person name="Momiyama H."/>
            <person name="Satoh N."/>
            <person name="Takami S."/>
            <person name="Terashima Y."/>
            <person name="Suzuki O."/>
            <person name="Nakagawa S."/>
            <person name="Senoh A."/>
            <person name="Mizoguchi H."/>
            <person name="Goto Y."/>
            <person name="Shimizu F."/>
            <person name="Wakebe H."/>
            <person name="Hishigaki H."/>
            <person name="Watanabe T."/>
            <person name="Sugiyama A."/>
            <person name="Takemoto M."/>
            <person name="Kawakami B."/>
            <person name="Yamazaki M."/>
            <person name="Watanabe K."/>
            <person name="Kumagai A."/>
            <person name="Itakura S."/>
            <person name="Fukuzumi Y."/>
            <person name="Fujimori Y."/>
            <person name="Komiyama M."/>
            <person name="Tashiro H."/>
            <person name="Tanigami A."/>
            <person name="Fujiwara T."/>
            <person name="Ono T."/>
            <person name="Yamada K."/>
            <person name="Fujii Y."/>
            <person name="Ozaki K."/>
            <person name="Hirao M."/>
            <person name="Ohmori Y."/>
            <person name="Kawabata A."/>
            <person name="Hikiji T."/>
            <person name="Kobatake N."/>
            <person name="Inagaki H."/>
            <person name="Ikema Y."/>
            <person name="Okamoto S."/>
            <person name="Okitani R."/>
            <person name="Kawakami T."/>
            <person name="Noguchi S."/>
            <person name="Itoh T."/>
            <person name="Shigeta K."/>
            <person name="Senba T."/>
            <person name="Matsumura K."/>
            <person name="Nakajima Y."/>
            <person name="Mizuno T."/>
            <person name="Morinaga M."/>
            <person name="Sasaki M."/>
            <person name="Togashi T."/>
            <person name="Oyama M."/>
            <person name="Hata H."/>
            <person name="Watanabe M."/>
            <person name="Komatsu T."/>
            <person name="Mizushima-Sugano J."/>
            <person name="Satoh T."/>
            <person name="Shirai Y."/>
            <person name="Takahashi Y."/>
            <person name="Nakagawa K."/>
            <person name="Okumura K."/>
            <person name="Nagase T."/>
            <person name="Nomura N."/>
            <person name="Kikuchi H."/>
            <person name="Masuho Y."/>
            <person name="Yamashita R."/>
            <person name="Nakai K."/>
            <person name="Yada T."/>
            <person name="Nakamura Y."/>
            <person name="Ohara O."/>
            <person name="Isogai T."/>
            <person name="Sugano S."/>
        </authorList>
    </citation>
    <scope>NUCLEOTIDE SEQUENCE [LARGE SCALE MRNA] OF 233-488 (ISOFORM 1)</scope>
</reference>
<reference key="5">
    <citation type="journal article" date="2004" name="Genome Res.">
        <title>The status, quality, and expansion of the NIH full-length cDNA project: the Mammalian Gene Collection (MGC).</title>
        <authorList>
            <consortium name="The MGC Project Team"/>
        </authorList>
    </citation>
    <scope>NUCLEOTIDE SEQUENCE [LARGE SCALE MRNA] OF 288-488 (ISOFORM 1)</scope>
    <source>
        <tissue>Brain</tissue>
    </source>
</reference>
<reference key="6">
    <citation type="journal article" date="2006" name="Biochim. Biophys. Acta">
        <title>Intracellular localization and tissue-specific distribution of human and yeast DHHC cysteine-rich domain-containing proteins.</title>
        <authorList>
            <person name="Ohno Y."/>
            <person name="Kihara A."/>
            <person name="Sano T."/>
            <person name="Igarashi Y."/>
        </authorList>
    </citation>
    <scope>SUBCELLULAR LOCATION</scope>
    <scope>TISSUE SPECIFICITY</scope>
</reference>
<reference key="7">
    <citation type="journal article" date="2008" name="Proc. Natl. Acad. Sci. U.S.A.">
        <title>A quantitative atlas of mitotic phosphorylation.</title>
        <authorList>
            <person name="Dephoure N."/>
            <person name="Zhou C."/>
            <person name="Villen J."/>
            <person name="Beausoleil S.A."/>
            <person name="Bakalarski C.E."/>
            <person name="Elledge S.J."/>
            <person name="Gygi S.P."/>
        </authorList>
    </citation>
    <scope>PHOSPHORYLATION [LARGE SCALE ANALYSIS] AT SER-455</scope>
    <scope>IDENTIFICATION BY MASS SPECTROMETRY [LARGE SCALE ANALYSIS]</scope>
    <source>
        <tissue>Cervix carcinoma</tissue>
    </source>
</reference>
<reference key="8">
    <citation type="journal article" date="2010" name="Sci. Signal.">
        <title>Quantitative phosphoproteomics reveals widespread full phosphorylation site occupancy during mitosis.</title>
        <authorList>
            <person name="Olsen J.V."/>
            <person name="Vermeulen M."/>
            <person name="Santamaria A."/>
            <person name="Kumar C."/>
            <person name="Miller M.L."/>
            <person name="Jensen L.J."/>
            <person name="Gnad F."/>
            <person name="Cox J."/>
            <person name="Jensen T.S."/>
            <person name="Nigg E.A."/>
            <person name="Brunak S."/>
            <person name="Mann M."/>
        </authorList>
    </citation>
    <scope>PHOSPHORYLATION [LARGE SCALE ANALYSIS] AT SER-455</scope>
    <scope>IDENTIFICATION BY MASS SPECTROMETRY [LARGE SCALE ANALYSIS]</scope>
    <source>
        <tissue>Cervix carcinoma</tissue>
    </source>
</reference>
<reference key="9">
    <citation type="journal article" date="2011" name="Leukemia">
        <title>Activation of a novel palmitoyltransferase ZDHHC14 in acute biphenotypic leukemia and subsets of acute myeloid leukemia.</title>
        <authorList>
            <person name="Yu L."/>
            <person name="Reader J.C."/>
            <person name="Chen C."/>
            <person name="Zhao X.F."/>
            <person name="Ha J.S."/>
            <person name="Lee C."/>
            <person name="York T."/>
            <person name="Gojo I."/>
            <person name="Baer M.R."/>
            <person name="Ning Y."/>
        </authorList>
    </citation>
    <scope>FUNCTION</scope>
</reference>
<reference key="10">
    <citation type="journal article" date="2013" name="J. Proteome Res.">
        <title>Toward a comprehensive characterization of a human cancer cell phosphoproteome.</title>
        <authorList>
            <person name="Zhou H."/>
            <person name="Di Palma S."/>
            <person name="Preisinger C."/>
            <person name="Peng M."/>
            <person name="Polat A.N."/>
            <person name="Heck A.J."/>
            <person name="Mohammed S."/>
        </authorList>
    </citation>
    <scope>PHOSPHORYLATION [LARGE SCALE ANALYSIS] AT SER-455</scope>
    <scope>IDENTIFICATION BY MASS SPECTROMETRY [LARGE SCALE ANALYSIS]</scope>
    <source>
        <tissue>Cervix carcinoma</tissue>
        <tissue>Erythroleukemia</tissue>
    </source>
</reference>
<reference key="11">
    <citation type="journal article" date="2014" name="J. Pathol.">
        <title>Identification of ZDHHC14 as a novel human tumour suppressor gene.</title>
        <authorList>
            <person name="Yeste-Velasco M."/>
            <person name="Mao X."/>
            <person name="Grose R."/>
            <person name="Kudahetti S.C."/>
            <person name="Lin D."/>
            <person name="Marzec J."/>
            <person name="Vasiljevic N."/>
            <person name="Chaplin T."/>
            <person name="Xue L."/>
            <person name="Xu M."/>
            <person name="Foster J.M."/>
            <person name="Karnam S.S."/>
            <person name="James S.Y."/>
            <person name="Chioni A.M."/>
            <person name="Gould D."/>
            <person name="Lorincz A.T."/>
            <person name="Oliver R.T."/>
            <person name="Chelala C."/>
            <person name="Thomas G.M."/>
            <person name="Shipley J.M."/>
            <person name="Mather S.J."/>
            <person name="Berney D.M."/>
            <person name="Young B.D."/>
            <person name="Lu Y.J."/>
        </authorList>
    </citation>
    <scope>FUNCTION</scope>
</reference>
<reference key="12">
    <citation type="journal article" date="2016" name="J. Biol. Chem.">
        <title>S-Palmitoylation of a Novel Site in the beta2-Adrenergic Receptor Associated with a Novel Intracellular Itinerary.</title>
        <authorList>
            <person name="Adachi N."/>
            <person name="Hess D.T."/>
            <person name="McLaughlin P."/>
            <person name="Stamler J.S."/>
        </authorList>
    </citation>
    <scope>FUNCTION</scope>
    <scope>CATALYTIC ACTIVITY</scope>
    <scope>SUBCELLULAR LOCATION</scope>
</reference>
<organism>
    <name type="scientific">Homo sapiens</name>
    <name type="common">Human</name>
    <dbReference type="NCBI Taxonomy" id="9606"/>
    <lineage>
        <taxon>Eukaryota</taxon>
        <taxon>Metazoa</taxon>
        <taxon>Chordata</taxon>
        <taxon>Craniata</taxon>
        <taxon>Vertebrata</taxon>
        <taxon>Euteleostomi</taxon>
        <taxon>Mammalia</taxon>
        <taxon>Eutheria</taxon>
        <taxon>Euarchontoglires</taxon>
        <taxon>Primates</taxon>
        <taxon>Haplorrhini</taxon>
        <taxon>Catarrhini</taxon>
        <taxon>Hominidae</taxon>
        <taxon>Homo</taxon>
    </lineage>
</organism>
<accession>Q8IZN3</accession>
<accession>A6NDB7</accession>
<accession>Q5JS07</accession>
<accession>Q5JS08</accession>
<accession>Q6PHS4</accession>
<accession>Q8IZN2</accession>
<accession>Q9H7F1</accession>